<name>MCPH1_HYLLA</name>
<protein>
    <recommendedName>
        <fullName evidence="3">Microcephalin</fullName>
    </recommendedName>
</protein>
<sequence>MAAHILKDVVAYVEVWSSNGTENYSKTFTTQLVDMGAKVSKTFNKQVTHVIFKDGYQSTWDKAQKRGVKLVSVLWVEKCRTAGAHIDESLFPAINTNEHLPSLIKKKRKCMQPKDFNFKTPENDKRFQKKFEKMAKELQRQKTSLDDDVPILLFESSGSLTYSPTIKINSSHHSAMEKRLQEMKEKRENLSPSSSQMIQQSHDNPSNSLCEAPLNISRDTLCSDESFAGGVHSSFDDLCGNSGCGNQERKLGGSINDIESDMCISSLVLKANNIHSSPSFTHLDKSSPQKFLSNLSKEEINLQRNIAGKIVTPDQKQAAGMSQETFEEKYRLSPTLSSTKGHLLIRSRPSSSSVKRQRVSHGSHSPSKGKSKRKRSIRRSIMPRLQLCRSEGSLQHVAGPALKALSCGESSYDDYFSPDNLKERNSENLPPTSQLPSSLAQFSCRSLSKKERTSIFEMSDFSCIGKKTRTVDITSFTAKTISSPQKTANGEGRATLSCVTSEESSAPGETLRCCRQAGKEDACPEGNGFSYTIEDPPFPKGHDGDLTPLEGSLEEVKEAVGLKSTQNKGTTSKISNSSEGEAQSEHEPCFIVDCNMETSTEEKENLPGGYGGSVKNRPTRHDLLDDSCDSFKDLIKPHEELKKSGRGKKPTRTLVMTSMPSEKQNVVIQVVDKLKGFSIAPDVCETTTHVLSGKPLRTLNVLLGIARGCWVLSYDWVLWSLELGHWISEEPFELSNHFPAAPLCRSECHLSAGPYRGTLFADQPVMFVSPASSPPVAKLCELVHLCGGRVSQVPRQASIVIGPYSGKKKATVKYLSEKWVLDSIIQHKVCASENYLLPQR</sequence>
<keyword id="KW-0963">Cytoplasm</keyword>
<keyword id="KW-0206">Cytoskeleton</keyword>
<keyword id="KW-0597">Phosphoprotein</keyword>
<keyword id="KW-0677">Repeat</keyword>
<proteinExistence type="inferred from homology"/>
<comment type="function">
    <text evidence="1">Implicated in chromosome condensation and DNA damage induced cellular responses. May play a role in neurogenesis and regulation of the size of the cerebral cortex (By similarity).</text>
</comment>
<comment type="subunit">
    <text evidence="1">Interacts with CDC27 and maybe other components of the APC/C complex. Interacts with histone variant H2AX under DNA damage conditions (By similarity).</text>
</comment>
<comment type="subcellular location">
    <subcellularLocation>
        <location evidence="1">Cytoplasm</location>
        <location evidence="1">Cytoskeleton</location>
        <location evidence="1">Microtubule organizing center</location>
        <location evidence="1">Centrosome</location>
    </subcellularLocation>
</comment>
<comment type="domain">
    <text evidence="1">BRCT domain 1 is required to prevent abnormal chromosome condensation. It binds directly to the SWI-SNF chromatin remodeling complex (By similarity).</text>
</comment>
<comment type="domain">
    <text evidence="1">BRCT domains 2 and 3 recognize phosphoserine/phosphothreonine marks on proteins with high selectivity, and mediate interaction with phosphorylated CDC27. They also mediate the dual recognition of phosphoserine and phosphotyrosine in the C-terminal tail of histone H2AX (By similarity).</text>
</comment>
<dbReference type="EMBL" id="AH013764">
    <property type="protein sequence ID" value="AAS91380.1"/>
    <property type="molecule type" value="Genomic_DNA"/>
</dbReference>
<dbReference type="SMR" id="P61592"/>
<dbReference type="GO" id="GO:0005813">
    <property type="term" value="C:centrosome"/>
    <property type="evidence" value="ECO:0007669"/>
    <property type="project" value="UniProtKB-SubCell"/>
</dbReference>
<dbReference type="GO" id="GO:0005737">
    <property type="term" value="C:cytoplasm"/>
    <property type="evidence" value="ECO:0007669"/>
    <property type="project" value="UniProtKB-KW"/>
</dbReference>
<dbReference type="GO" id="GO:0021987">
    <property type="term" value="P:cerebral cortex development"/>
    <property type="evidence" value="ECO:0007669"/>
    <property type="project" value="InterPro"/>
</dbReference>
<dbReference type="GO" id="GO:0000278">
    <property type="term" value="P:mitotic cell cycle"/>
    <property type="evidence" value="ECO:0007669"/>
    <property type="project" value="TreeGrafter"/>
</dbReference>
<dbReference type="CDD" id="cd17716">
    <property type="entry name" value="BRCT_microcephalin_rpt1"/>
    <property type="match status" value="1"/>
</dbReference>
<dbReference type="CDD" id="cd17736">
    <property type="entry name" value="BRCT_microcephalin_rpt2"/>
    <property type="match status" value="1"/>
</dbReference>
<dbReference type="CDD" id="cd17751">
    <property type="entry name" value="BRCT_microcephalin_rpt3"/>
    <property type="match status" value="1"/>
</dbReference>
<dbReference type="FunFam" id="3.40.50.10190:FF:000047">
    <property type="entry name" value="Microcephalin"/>
    <property type="match status" value="1"/>
</dbReference>
<dbReference type="FunFam" id="3.40.50.10190:FF:000053">
    <property type="entry name" value="Microcephalin"/>
    <property type="match status" value="1"/>
</dbReference>
<dbReference type="FunFam" id="3.40.50.10190:FF:000055">
    <property type="entry name" value="Microcephalin"/>
    <property type="match status" value="1"/>
</dbReference>
<dbReference type="Gene3D" id="3.40.50.10190">
    <property type="entry name" value="BRCT domain"/>
    <property type="match status" value="3"/>
</dbReference>
<dbReference type="InterPro" id="IPR001357">
    <property type="entry name" value="BRCT_dom"/>
</dbReference>
<dbReference type="InterPro" id="IPR036420">
    <property type="entry name" value="BRCT_dom_sf"/>
</dbReference>
<dbReference type="InterPro" id="IPR022047">
    <property type="entry name" value="Microcephalin-like"/>
</dbReference>
<dbReference type="InterPro" id="IPR029504">
    <property type="entry name" value="Microcephalin_mammal"/>
</dbReference>
<dbReference type="PANTHER" id="PTHR14625">
    <property type="entry name" value="MICROCEPHALIN"/>
    <property type="match status" value="1"/>
</dbReference>
<dbReference type="PANTHER" id="PTHR14625:SF3">
    <property type="entry name" value="MICROCEPHALIN"/>
    <property type="match status" value="1"/>
</dbReference>
<dbReference type="Pfam" id="PF12258">
    <property type="entry name" value="Microcephalin"/>
    <property type="match status" value="1"/>
</dbReference>
<dbReference type="Pfam" id="PF12738">
    <property type="entry name" value="PTCB-BRCT"/>
    <property type="match status" value="1"/>
</dbReference>
<dbReference type="SMART" id="SM00292">
    <property type="entry name" value="BRCT"/>
    <property type="match status" value="3"/>
</dbReference>
<dbReference type="SUPFAM" id="SSF52113">
    <property type="entry name" value="BRCT domain"/>
    <property type="match status" value="3"/>
</dbReference>
<dbReference type="PROSITE" id="PS50172">
    <property type="entry name" value="BRCT"/>
    <property type="match status" value="3"/>
</dbReference>
<organism>
    <name type="scientific">Hylobates lar</name>
    <name type="common">Lar gibbon</name>
    <name type="synonym">White-handed gibbon</name>
    <dbReference type="NCBI Taxonomy" id="9580"/>
    <lineage>
        <taxon>Eukaryota</taxon>
        <taxon>Metazoa</taxon>
        <taxon>Chordata</taxon>
        <taxon>Craniata</taxon>
        <taxon>Vertebrata</taxon>
        <taxon>Euteleostomi</taxon>
        <taxon>Mammalia</taxon>
        <taxon>Eutheria</taxon>
        <taxon>Euarchontoglires</taxon>
        <taxon>Primates</taxon>
        <taxon>Haplorrhini</taxon>
        <taxon>Catarrhini</taxon>
        <taxon>Hylobatidae</taxon>
        <taxon>Hylobates</taxon>
    </lineage>
</organism>
<gene>
    <name evidence="3" type="primary">MCPH1</name>
</gene>
<accession>P61592</accession>
<feature type="chain" id="PRO_0000096297" description="Microcephalin">
    <location>
        <begin position="1"/>
        <end position="840"/>
    </location>
</feature>
<feature type="domain" description="BRCT 1" evidence="4">
    <location>
        <begin position="1"/>
        <end position="93"/>
    </location>
</feature>
<feature type="domain" description="BRCT 2" evidence="4">
    <location>
        <begin position="644"/>
        <end position="734"/>
    </location>
</feature>
<feature type="domain" description="BRCT 3" evidence="4">
    <location>
        <begin position="755"/>
        <end position="837"/>
    </location>
</feature>
<feature type="region of interest" description="Disordered" evidence="5">
    <location>
        <begin position="184"/>
        <end position="206"/>
    </location>
</feature>
<feature type="region of interest" description="Disordered" evidence="5">
    <location>
        <begin position="313"/>
        <end position="379"/>
    </location>
</feature>
<feature type="region of interest" description="Disordered" evidence="5">
    <location>
        <begin position="418"/>
        <end position="437"/>
    </location>
</feature>
<feature type="region of interest" description="Disordered" evidence="5">
    <location>
        <begin position="562"/>
        <end position="586"/>
    </location>
</feature>
<feature type="compositionally biased region" description="Polar residues" evidence="5">
    <location>
        <begin position="190"/>
        <end position="206"/>
    </location>
</feature>
<feature type="compositionally biased region" description="Basic residues" evidence="5">
    <location>
        <begin position="355"/>
        <end position="378"/>
    </location>
</feature>
<feature type="compositionally biased region" description="Polar residues" evidence="5">
    <location>
        <begin position="427"/>
        <end position="437"/>
    </location>
</feature>
<feature type="compositionally biased region" description="Polar residues" evidence="5">
    <location>
        <begin position="563"/>
        <end position="581"/>
    </location>
</feature>
<feature type="modified residue" description="Phosphoserine" evidence="3">
    <location>
        <position position="279"/>
    </location>
</feature>
<feature type="modified residue" description="Phosphoserine" evidence="3">
    <location>
        <position position="287"/>
    </location>
</feature>
<feature type="modified residue" description="Phosphoserine" evidence="2">
    <location>
        <position position="296"/>
    </location>
</feature>
<feature type="modified residue" description="Phosphoserine" evidence="3">
    <location>
        <position position="333"/>
    </location>
</feature>
<feature type="modified residue" description="Phosphothreonine" evidence="3">
    <location>
        <position position="335"/>
    </location>
</feature>
<feature type="modified residue" description="Phosphoserine" evidence="3">
    <location>
        <position position="552"/>
    </location>
</feature>
<evidence type="ECO:0000250" key="1"/>
<evidence type="ECO:0000250" key="2">
    <source>
        <dbReference type="UniProtKB" id="Q7TT79"/>
    </source>
</evidence>
<evidence type="ECO:0000250" key="3">
    <source>
        <dbReference type="UniProtKB" id="Q8NEM0"/>
    </source>
</evidence>
<evidence type="ECO:0000255" key="4">
    <source>
        <dbReference type="PROSITE-ProRule" id="PRU00033"/>
    </source>
</evidence>
<evidence type="ECO:0000256" key="5">
    <source>
        <dbReference type="SAM" id="MobiDB-lite"/>
    </source>
</evidence>
<reference key="1">
    <citation type="journal article" date="2004" name="Hum. Mol. Genet.">
        <title>Reconstructing the evolutionary history of microcephalin, a gene controlling human brain size.</title>
        <authorList>
            <person name="Evans P.D."/>
            <person name="Anderson J.R."/>
            <person name="Vallender E.J."/>
            <person name="Choi S.S."/>
            <person name="Lahn B.T."/>
        </authorList>
    </citation>
    <scope>NUCLEOTIDE SEQUENCE [GENOMIC DNA]</scope>
</reference>